<name>COMGB_BACSU</name>
<comment type="function">
    <text evidence="2">Required for transformation and DNA binding.</text>
</comment>
<comment type="subcellular location">
    <subcellularLocation>
        <location evidence="3">Cell membrane</location>
        <topology evidence="3">Multi-pass membrane protein</topology>
    </subcellularLocation>
</comment>
<comment type="similarity">
    <text evidence="3">Belongs to the GSP F family.</text>
</comment>
<gene>
    <name type="primary">comGB</name>
    <name type="synonym">comG2</name>
    <name type="ordered locus">BSU24720</name>
</gene>
<reference key="1">
    <citation type="journal article" date="1989" name="J. Bacteriol.">
        <title>Nucleotide sequence and genetic organization of the Bacillus subtilis comG operon.</title>
        <authorList>
            <person name="Albano M."/>
            <person name="Breitling R."/>
            <person name="Dubnau D.A."/>
        </authorList>
    </citation>
    <scope>NUCLEOTIDE SEQUENCE [GENOMIC DNA]</scope>
</reference>
<reference key="2">
    <citation type="journal article" date="1996" name="Microbiology">
        <title>Systematic sequencing of the 283 kb 210 degrees-232 degrees region of the Bacillus subtilis genome containing the skin element and many sporulation genes.</title>
        <authorList>
            <person name="Mizuno M."/>
            <person name="Masuda S."/>
            <person name="Takemaru K."/>
            <person name="Hosono S."/>
            <person name="Sato T."/>
            <person name="Takeuchi M."/>
            <person name="Kobayashi Y."/>
        </authorList>
    </citation>
    <scope>NUCLEOTIDE SEQUENCE [GENOMIC DNA]</scope>
    <source>
        <strain>168 / JH642</strain>
    </source>
</reference>
<reference key="3">
    <citation type="journal article" date="1997" name="Nature">
        <title>The complete genome sequence of the Gram-positive bacterium Bacillus subtilis.</title>
        <authorList>
            <person name="Kunst F."/>
            <person name="Ogasawara N."/>
            <person name="Moszer I."/>
            <person name="Albertini A.M."/>
            <person name="Alloni G."/>
            <person name="Azevedo V."/>
            <person name="Bertero M.G."/>
            <person name="Bessieres P."/>
            <person name="Bolotin A."/>
            <person name="Borchert S."/>
            <person name="Borriss R."/>
            <person name="Boursier L."/>
            <person name="Brans A."/>
            <person name="Braun M."/>
            <person name="Brignell S.C."/>
            <person name="Bron S."/>
            <person name="Brouillet S."/>
            <person name="Bruschi C.V."/>
            <person name="Caldwell B."/>
            <person name="Capuano V."/>
            <person name="Carter N.M."/>
            <person name="Choi S.-K."/>
            <person name="Codani J.-J."/>
            <person name="Connerton I.F."/>
            <person name="Cummings N.J."/>
            <person name="Daniel R.A."/>
            <person name="Denizot F."/>
            <person name="Devine K.M."/>
            <person name="Duesterhoeft A."/>
            <person name="Ehrlich S.D."/>
            <person name="Emmerson P.T."/>
            <person name="Entian K.-D."/>
            <person name="Errington J."/>
            <person name="Fabret C."/>
            <person name="Ferrari E."/>
            <person name="Foulger D."/>
            <person name="Fritz C."/>
            <person name="Fujita M."/>
            <person name="Fujita Y."/>
            <person name="Fuma S."/>
            <person name="Galizzi A."/>
            <person name="Galleron N."/>
            <person name="Ghim S.-Y."/>
            <person name="Glaser P."/>
            <person name="Goffeau A."/>
            <person name="Golightly E.J."/>
            <person name="Grandi G."/>
            <person name="Guiseppi G."/>
            <person name="Guy B.J."/>
            <person name="Haga K."/>
            <person name="Haiech J."/>
            <person name="Harwood C.R."/>
            <person name="Henaut A."/>
            <person name="Hilbert H."/>
            <person name="Holsappel S."/>
            <person name="Hosono S."/>
            <person name="Hullo M.-F."/>
            <person name="Itaya M."/>
            <person name="Jones L.-M."/>
            <person name="Joris B."/>
            <person name="Karamata D."/>
            <person name="Kasahara Y."/>
            <person name="Klaerr-Blanchard M."/>
            <person name="Klein C."/>
            <person name="Kobayashi Y."/>
            <person name="Koetter P."/>
            <person name="Koningstein G."/>
            <person name="Krogh S."/>
            <person name="Kumano M."/>
            <person name="Kurita K."/>
            <person name="Lapidus A."/>
            <person name="Lardinois S."/>
            <person name="Lauber J."/>
            <person name="Lazarevic V."/>
            <person name="Lee S.-M."/>
            <person name="Levine A."/>
            <person name="Liu H."/>
            <person name="Masuda S."/>
            <person name="Mauel C."/>
            <person name="Medigue C."/>
            <person name="Medina N."/>
            <person name="Mellado R.P."/>
            <person name="Mizuno M."/>
            <person name="Moestl D."/>
            <person name="Nakai S."/>
            <person name="Noback M."/>
            <person name="Noone D."/>
            <person name="O'Reilly M."/>
            <person name="Ogawa K."/>
            <person name="Ogiwara A."/>
            <person name="Oudega B."/>
            <person name="Park S.-H."/>
            <person name="Parro V."/>
            <person name="Pohl T.M."/>
            <person name="Portetelle D."/>
            <person name="Porwollik S."/>
            <person name="Prescott A.M."/>
            <person name="Presecan E."/>
            <person name="Pujic P."/>
            <person name="Purnelle B."/>
            <person name="Rapoport G."/>
            <person name="Rey M."/>
            <person name="Reynolds S."/>
            <person name="Rieger M."/>
            <person name="Rivolta C."/>
            <person name="Rocha E."/>
            <person name="Roche B."/>
            <person name="Rose M."/>
            <person name="Sadaie Y."/>
            <person name="Sato T."/>
            <person name="Scanlan E."/>
            <person name="Schleich S."/>
            <person name="Schroeter R."/>
            <person name="Scoffone F."/>
            <person name="Sekiguchi J."/>
            <person name="Sekowska A."/>
            <person name="Seror S.J."/>
            <person name="Serror P."/>
            <person name="Shin B.-S."/>
            <person name="Soldo B."/>
            <person name="Sorokin A."/>
            <person name="Tacconi E."/>
            <person name="Takagi T."/>
            <person name="Takahashi H."/>
            <person name="Takemaru K."/>
            <person name="Takeuchi M."/>
            <person name="Tamakoshi A."/>
            <person name="Tanaka T."/>
            <person name="Terpstra P."/>
            <person name="Tognoni A."/>
            <person name="Tosato V."/>
            <person name="Uchiyama S."/>
            <person name="Vandenbol M."/>
            <person name="Vannier F."/>
            <person name="Vassarotti A."/>
            <person name="Viari A."/>
            <person name="Wambutt R."/>
            <person name="Wedler E."/>
            <person name="Wedler H."/>
            <person name="Weitzenegger T."/>
            <person name="Winters P."/>
            <person name="Wipat A."/>
            <person name="Yamamoto H."/>
            <person name="Yamane K."/>
            <person name="Yasumoto K."/>
            <person name="Yata K."/>
            <person name="Yoshida K."/>
            <person name="Yoshikawa H.-F."/>
            <person name="Zumstein E."/>
            <person name="Yoshikawa H."/>
            <person name="Danchin A."/>
        </authorList>
    </citation>
    <scope>NUCLEOTIDE SEQUENCE [LARGE SCALE GENOMIC DNA]</scope>
    <source>
        <strain>168</strain>
    </source>
</reference>
<reference key="4">
    <citation type="journal article" date="1998" name="J. Bacteriol.">
        <title>All seven comG open reading frames are required for DNA binding during transformation of competent Bacillus subtilis.</title>
        <authorList>
            <person name="Chung Y.S."/>
            <person name="Dubnau D.A."/>
        </authorList>
    </citation>
    <scope>FUNCTION</scope>
</reference>
<accession>P25954</accession>
<dbReference type="EMBL" id="M29691">
    <property type="protein sequence ID" value="AAA83368.1"/>
    <property type="molecule type" value="Genomic_DNA"/>
</dbReference>
<dbReference type="EMBL" id="D84432">
    <property type="protein sequence ID" value="BAA12534.1"/>
    <property type="molecule type" value="Genomic_DNA"/>
</dbReference>
<dbReference type="EMBL" id="AL009126">
    <property type="protein sequence ID" value="CAB14403.1"/>
    <property type="molecule type" value="Genomic_DNA"/>
</dbReference>
<dbReference type="PIR" id="C30338">
    <property type="entry name" value="C30338"/>
</dbReference>
<dbReference type="RefSeq" id="NP_390352.1">
    <property type="nucleotide sequence ID" value="NC_000964.3"/>
</dbReference>
<dbReference type="RefSeq" id="WP_003246116.1">
    <property type="nucleotide sequence ID" value="NC_000964.3"/>
</dbReference>
<dbReference type="SMR" id="P25954"/>
<dbReference type="FunCoup" id="P25954">
    <property type="interactions" value="223"/>
</dbReference>
<dbReference type="STRING" id="224308.BSU24720"/>
<dbReference type="TCDB" id="3.A.14.1.1">
    <property type="family name" value="the fimbrilin/protein exporter (fpe) family"/>
</dbReference>
<dbReference type="PaxDb" id="224308-BSU24720"/>
<dbReference type="EnsemblBacteria" id="CAB14403">
    <property type="protein sequence ID" value="CAB14403"/>
    <property type="gene ID" value="BSU_24720"/>
</dbReference>
<dbReference type="GeneID" id="938527"/>
<dbReference type="KEGG" id="bsu:BSU24720"/>
<dbReference type="PATRIC" id="fig|224308.43.peg.2579"/>
<dbReference type="eggNOG" id="COG1459">
    <property type="taxonomic scope" value="Bacteria"/>
</dbReference>
<dbReference type="InParanoid" id="P25954"/>
<dbReference type="OrthoDB" id="1638902at2"/>
<dbReference type="PhylomeDB" id="P25954"/>
<dbReference type="BioCyc" id="BSUB:BSU24720-MONOMER"/>
<dbReference type="Proteomes" id="UP000001570">
    <property type="component" value="Chromosome"/>
</dbReference>
<dbReference type="GO" id="GO:0005886">
    <property type="term" value="C:plasma membrane"/>
    <property type="evidence" value="ECO:0007669"/>
    <property type="project" value="UniProtKB-SubCell"/>
</dbReference>
<dbReference type="GO" id="GO:0030420">
    <property type="term" value="P:establishment of competence for transformation"/>
    <property type="evidence" value="ECO:0007669"/>
    <property type="project" value="UniProtKB-KW"/>
</dbReference>
<dbReference type="GO" id="GO:0009306">
    <property type="term" value="P:protein secretion"/>
    <property type="evidence" value="ECO:0007669"/>
    <property type="project" value="InterPro"/>
</dbReference>
<dbReference type="Gene3D" id="1.20.81.30">
    <property type="entry name" value="Type II secretion system (T2SS), domain F"/>
    <property type="match status" value="2"/>
</dbReference>
<dbReference type="InterPro" id="IPR003004">
    <property type="entry name" value="GspF/PilC"/>
</dbReference>
<dbReference type="InterPro" id="IPR001992">
    <property type="entry name" value="T2SS_GspF/T4SS_PilC_CS"/>
</dbReference>
<dbReference type="InterPro" id="IPR018076">
    <property type="entry name" value="T2SS_GspF_dom"/>
</dbReference>
<dbReference type="InterPro" id="IPR042094">
    <property type="entry name" value="T2SS_GspF_sf"/>
</dbReference>
<dbReference type="InterPro" id="IPR047692">
    <property type="entry name" value="T4P_ComGB"/>
</dbReference>
<dbReference type="NCBIfam" id="NF041012">
    <property type="entry name" value="T4P_ComGB"/>
    <property type="match status" value="1"/>
</dbReference>
<dbReference type="PANTHER" id="PTHR30012">
    <property type="entry name" value="GENERAL SECRETION PATHWAY PROTEIN"/>
    <property type="match status" value="1"/>
</dbReference>
<dbReference type="PANTHER" id="PTHR30012:SF0">
    <property type="entry name" value="TYPE II SECRETION SYSTEM PROTEIN F-RELATED"/>
    <property type="match status" value="1"/>
</dbReference>
<dbReference type="Pfam" id="PF00482">
    <property type="entry name" value="T2SSF"/>
    <property type="match status" value="2"/>
</dbReference>
<dbReference type="PROSITE" id="PS00874">
    <property type="entry name" value="T2SP_F"/>
    <property type="match status" value="1"/>
</dbReference>
<proteinExistence type="inferred from homology"/>
<feature type="chain" id="PRO_0000207839" description="ComG operon protein 2">
    <location>
        <begin position="1"/>
        <end position="323"/>
    </location>
</feature>
<feature type="transmembrane region" description="Helical" evidence="1">
    <location>
        <begin position="93"/>
        <end position="113"/>
    </location>
</feature>
<feature type="transmembrane region" description="Helical" evidence="1">
    <location>
        <begin position="143"/>
        <end position="163"/>
    </location>
</feature>
<feature type="transmembrane region" description="Helical" evidence="1">
    <location>
        <begin position="296"/>
        <end position="316"/>
    </location>
</feature>
<keyword id="KW-1003">Cell membrane</keyword>
<keyword id="KW-0178">Competence</keyword>
<keyword id="KW-0472">Membrane</keyword>
<keyword id="KW-1185">Reference proteome</keyword>
<keyword id="KW-0812">Transmembrane</keyword>
<keyword id="KW-1133">Transmembrane helix</keyword>
<keyword id="KW-0813">Transport</keyword>
<protein>
    <recommendedName>
        <fullName>ComG operon protein 2</fullName>
    </recommendedName>
</protein>
<sequence length="323" mass="37057">MTAGGYTLLDGLRLMELQMNKRQAADLTDSVTCLREGAPFYQVLKSLSFHKEAVGICYFAETHGELPASMIQSGELLERKIAQADQLKRVLRYPLFLIFTVAVMFYMLQSIIIPQFSGIYQSMNMETSRSTDMLFAFFQHIDLVIILLVLFTAGIGIYYWLVFKKKSPARQMLICIRIPLVGKLVKLFNSYFFSLQLSSLLKSGLSIYDSLNAFKHQTFLPFYRCEAEQLIERLKAGESIESAICGSLFYETDLSKVISHGQLSGRLDRELFTYSQFILQRLEHKAQKWTGILQPMIYGFVAAMILLVYLSMLVPMYQMMNQM</sequence>
<organism>
    <name type="scientific">Bacillus subtilis (strain 168)</name>
    <dbReference type="NCBI Taxonomy" id="224308"/>
    <lineage>
        <taxon>Bacteria</taxon>
        <taxon>Bacillati</taxon>
        <taxon>Bacillota</taxon>
        <taxon>Bacilli</taxon>
        <taxon>Bacillales</taxon>
        <taxon>Bacillaceae</taxon>
        <taxon>Bacillus</taxon>
    </lineage>
</organism>
<evidence type="ECO:0000255" key="1"/>
<evidence type="ECO:0000269" key="2">
    <source>
    </source>
</evidence>
<evidence type="ECO:0000305" key="3"/>